<keyword id="KW-0963">Cytoplasm</keyword>
<keyword id="KW-0460">Magnesium</keyword>
<keyword id="KW-0479">Metal-binding</keyword>
<keyword id="KW-1185">Reference proteome</keyword>
<keyword id="KW-0808">Transferase</keyword>
<name>IDSA_METJA</name>
<proteinExistence type="inferred from homology"/>
<dbReference type="EC" id="2.5.1.-"/>
<dbReference type="EMBL" id="L77117">
    <property type="protein sequence ID" value="AAB98865.1"/>
    <property type="molecule type" value="Genomic_DNA"/>
</dbReference>
<dbReference type="PIR" id="D64407">
    <property type="entry name" value="D64407"/>
</dbReference>
<dbReference type="SMR" id="Q58270"/>
<dbReference type="FunCoup" id="Q58270">
    <property type="interactions" value="60"/>
</dbReference>
<dbReference type="STRING" id="243232.MJ_0860"/>
<dbReference type="PaxDb" id="243232-MJ_0860"/>
<dbReference type="EnsemblBacteria" id="AAB98865">
    <property type="protein sequence ID" value="AAB98865"/>
    <property type="gene ID" value="MJ_0860"/>
</dbReference>
<dbReference type="KEGG" id="mja:MJ_0860"/>
<dbReference type="eggNOG" id="arCOG01726">
    <property type="taxonomic scope" value="Archaea"/>
</dbReference>
<dbReference type="HOGENOM" id="CLU_014015_2_1_2"/>
<dbReference type="InParanoid" id="Q58270"/>
<dbReference type="PhylomeDB" id="Q58270"/>
<dbReference type="Proteomes" id="UP000000805">
    <property type="component" value="Chromosome"/>
</dbReference>
<dbReference type="GO" id="GO:0005737">
    <property type="term" value="C:cytoplasm"/>
    <property type="evidence" value="ECO:0007669"/>
    <property type="project" value="UniProtKB-SubCell"/>
</dbReference>
<dbReference type="GO" id="GO:0046872">
    <property type="term" value="F:metal ion binding"/>
    <property type="evidence" value="ECO:0007669"/>
    <property type="project" value="UniProtKB-KW"/>
</dbReference>
<dbReference type="GO" id="GO:0004659">
    <property type="term" value="F:prenyltransferase activity"/>
    <property type="evidence" value="ECO:0000318"/>
    <property type="project" value="GO_Central"/>
</dbReference>
<dbReference type="GO" id="GO:0008299">
    <property type="term" value="P:isoprenoid biosynthetic process"/>
    <property type="evidence" value="ECO:0000318"/>
    <property type="project" value="GO_Central"/>
</dbReference>
<dbReference type="CDD" id="cd00685">
    <property type="entry name" value="Trans_IPPS_HT"/>
    <property type="match status" value="1"/>
</dbReference>
<dbReference type="Gene3D" id="1.10.600.10">
    <property type="entry name" value="Farnesyl Diphosphate Synthase"/>
    <property type="match status" value="1"/>
</dbReference>
<dbReference type="InterPro" id="IPR008949">
    <property type="entry name" value="Isoprenoid_synthase_dom_sf"/>
</dbReference>
<dbReference type="InterPro" id="IPR000092">
    <property type="entry name" value="Polyprenyl_synt"/>
</dbReference>
<dbReference type="InterPro" id="IPR033749">
    <property type="entry name" value="Polyprenyl_synt_CS"/>
</dbReference>
<dbReference type="PANTHER" id="PTHR12001">
    <property type="entry name" value="GERANYLGERANYL PYROPHOSPHATE SYNTHASE"/>
    <property type="match status" value="1"/>
</dbReference>
<dbReference type="PANTHER" id="PTHR12001:SF85">
    <property type="entry name" value="SHORT CHAIN ISOPRENYL DIPHOSPHATE SYNTHASE"/>
    <property type="match status" value="1"/>
</dbReference>
<dbReference type="Pfam" id="PF00348">
    <property type="entry name" value="polyprenyl_synt"/>
    <property type="match status" value="1"/>
</dbReference>
<dbReference type="SFLD" id="SFLDS00005">
    <property type="entry name" value="Isoprenoid_Synthase_Type_I"/>
    <property type="match status" value="1"/>
</dbReference>
<dbReference type="SFLD" id="SFLDG01017">
    <property type="entry name" value="Polyprenyl_Transferase_Like"/>
    <property type="match status" value="1"/>
</dbReference>
<dbReference type="SUPFAM" id="SSF48576">
    <property type="entry name" value="Terpenoid synthases"/>
    <property type="match status" value="1"/>
</dbReference>
<dbReference type="PROSITE" id="PS00723">
    <property type="entry name" value="POLYPRENYL_SYNTHASE_1"/>
    <property type="match status" value="1"/>
</dbReference>
<dbReference type="PROSITE" id="PS00444">
    <property type="entry name" value="POLYPRENYL_SYNTHASE_2"/>
    <property type="match status" value="1"/>
</dbReference>
<protein>
    <recommendedName>
        <fullName>Short chain isoprenyl diphosphate synthase</fullName>
        <ecNumber>2.5.1.-</ecNumber>
    </recommendedName>
</protein>
<comment type="cofactor">
    <cofactor evidence="1">
        <name>Mg(2+)</name>
        <dbReference type="ChEBI" id="CHEBI:18420"/>
    </cofactor>
    <text evidence="1">Binds 2 Mg(2+) ions per subunit.</text>
</comment>
<comment type="subunit">
    <text evidence="1">Homodimer.</text>
</comment>
<comment type="subcellular location">
    <subcellularLocation>
        <location evidence="1">Cytoplasm</location>
    </subcellularLocation>
</comment>
<comment type="similarity">
    <text evidence="4">Belongs to the FPP/GGPP synthase family.</text>
</comment>
<reference key="1">
    <citation type="journal article" date="1996" name="Science">
        <title>Complete genome sequence of the methanogenic archaeon, Methanococcus jannaschii.</title>
        <authorList>
            <person name="Bult C.J."/>
            <person name="White O."/>
            <person name="Olsen G.J."/>
            <person name="Zhou L."/>
            <person name="Fleischmann R.D."/>
            <person name="Sutton G.G."/>
            <person name="Blake J.A."/>
            <person name="FitzGerald L.M."/>
            <person name="Clayton R.A."/>
            <person name="Gocayne J.D."/>
            <person name="Kerlavage A.R."/>
            <person name="Dougherty B.A."/>
            <person name="Tomb J.-F."/>
            <person name="Adams M.D."/>
            <person name="Reich C.I."/>
            <person name="Overbeek R."/>
            <person name="Kirkness E.F."/>
            <person name="Weinstock K.G."/>
            <person name="Merrick J.M."/>
            <person name="Glodek A."/>
            <person name="Scott J.L."/>
            <person name="Geoghagen N.S.M."/>
            <person name="Weidman J.F."/>
            <person name="Fuhrmann J.L."/>
            <person name="Nguyen D."/>
            <person name="Utterback T.R."/>
            <person name="Kelley J.M."/>
            <person name="Peterson J.D."/>
            <person name="Sadow P.W."/>
            <person name="Hanna M.C."/>
            <person name="Cotton M.D."/>
            <person name="Roberts K.M."/>
            <person name="Hurst M.A."/>
            <person name="Kaine B.P."/>
            <person name="Borodovsky M."/>
            <person name="Klenk H.-P."/>
            <person name="Fraser C.M."/>
            <person name="Smith H.O."/>
            <person name="Woese C.R."/>
            <person name="Venter J.C."/>
        </authorList>
    </citation>
    <scope>NUCLEOTIDE SEQUENCE [LARGE SCALE GENOMIC DNA]</scope>
    <source>
        <strain>ATCC 43067 / DSM 2661 / JAL-1 / JCM 10045 / NBRC 100440</strain>
    </source>
</reference>
<organism>
    <name type="scientific">Methanocaldococcus jannaschii (strain ATCC 43067 / DSM 2661 / JAL-1 / JCM 10045 / NBRC 100440)</name>
    <name type="common">Methanococcus jannaschii</name>
    <dbReference type="NCBI Taxonomy" id="243232"/>
    <lineage>
        <taxon>Archaea</taxon>
        <taxon>Methanobacteriati</taxon>
        <taxon>Methanobacteriota</taxon>
        <taxon>Methanomada group</taxon>
        <taxon>Methanococci</taxon>
        <taxon>Methanococcales</taxon>
        <taxon>Methanocaldococcaceae</taxon>
        <taxon>Methanocaldococcus</taxon>
    </lineage>
</organism>
<accession>Q58270</accession>
<evidence type="ECO:0000250" key="1"/>
<evidence type="ECO:0000250" key="2">
    <source>
        <dbReference type="UniProtKB" id="P14324"/>
    </source>
</evidence>
<evidence type="ECO:0000250" key="3">
    <source>
        <dbReference type="UniProtKB" id="Q12051"/>
    </source>
</evidence>
<evidence type="ECO:0000305" key="4"/>
<sequence>MKELFKRGGIMLFDKNILQKIDEELKTYVDKDDKLYNASKHLLFAGGKRIRPYLTVVTYMLKKDDIEEVLPAAAAVELIHNYTLIHDDIMDNDDERRGKPTVHVVYGEPMAILAGDLLYAKAFEAVSRIKDNKKAHEVLKILSKACVEVCEGQAMDMEFENYYPTMEEYLDMIRKKTGALLEASVGIGAVMADCNEEEREALKEYAKRIGLTFQIQDDVLDLIGDQKKLGKPVGSDIREGKKTIIVIHALKTLDEDKKKRLLEILGNKNVKDEEIKEAIEILKPSIEYAKELMKQKTEEAKEYLKIFNKDRRKVLEDLADFIMSRIY</sequence>
<feature type="chain" id="PRO_0000123970" description="Short chain isoprenyl diphosphate synthase">
    <location>
        <begin position="1"/>
        <end position="327"/>
    </location>
</feature>
<feature type="binding site" evidence="2">
    <location>
        <position position="48"/>
    </location>
    <ligand>
        <name>isopentenyl diphosphate</name>
        <dbReference type="ChEBI" id="CHEBI:128769"/>
    </ligand>
</feature>
<feature type="binding site" evidence="2">
    <location>
        <position position="51"/>
    </location>
    <ligand>
        <name>isopentenyl diphosphate</name>
        <dbReference type="ChEBI" id="CHEBI:128769"/>
    </ligand>
</feature>
<feature type="binding site" evidence="3">
    <location>
        <position position="80"/>
    </location>
    <ligand>
        <name>isopentenyl diphosphate</name>
        <dbReference type="ChEBI" id="CHEBI:128769"/>
    </ligand>
</feature>
<feature type="binding site" evidence="2">
    <location>
        <position position="87"/>
    </location>
    <ligand>
        <name>Mg(2+)</name>
        <dbReference type="ChEBI" id="CHEBI:18420"/>
        <label>1</label>
    </ligand>
</feature>
<feature type="binding site" evidence="2">
    <location>
        <position position="87"/>
    </location>
    <ligand>
        <name>Mg(2+)</name>
        <dbReference type="ChEBI" id="CHEBI:18420"/>
        <label>2</label>
    </ligand>
</feature>
<feature type="binding site" evidence="2">
    <location>
        <position position="91"/>
    </location>
    <ligand>
        <name>Mg(2+)</name>
        <dbReference type="ChEBI" id="CHEBI:18420"/>
        <label>1</label>
    </ligand>
</feature>
<feature type="binding site" evidence="2">
    <location>
        <position position="91"/>
    </location>
    <ligand>
        <name>Mg(2+)</name>
        <dbReference type="ChEBI" id="CHEBI:18420"/>
        <label>2</label>
    </ligand>
</feature>
<feature type="binding site" evidence="1">
    <location>
        <position position="96"/>
    </location>
    <ligand>
        <name>an all-trans-polyprenyl diphosphate</name>
        <dbReference type="ChEBI" id="CHEBI:58914"/>
    </ligand>
</feature>
<feature type="binding site" evidence="2">
    <location>
        <position position="97"/>
    </location>
    <ligand>
        <name>isopentenyl diphosphate</name>
        <dbReference type="ChEBI" id="CHEBI:128769"/>
    </ligand>
</feature>
<feature type="binding site" evidence="1">
    <location>
        <position position="176"/>
    </location>
    <ligand>
        <name>an all-trans-polyprenyl diphosphate</name>
        <dbReference type="ChEBI" id="CHEBI:58914"/>
    </ligand>
</feature>
<feature type="binding site" evidence="1">
    <location>
        <position position="177"/>
    </location>
    <ligand>
        <name>an all-trans-polyprenyl diphosphate</name>
        <dbReference type="ChEBI" id="CHEBI:58914"/>
    </ligand>
</feature>
<feature type="binding site" evidence="1">
    <location>
        <position position="214"/>
    </location>
    <ligand>
        <name>an all-trans-polyprenyl diphosphate</name>
        <dbReference type="ChEBI" id="CHEBI:58914"/>
    </ligand>
</feature>
<feature type="binding site" evidence="1">
    <location>
        <position position="231"/>
    </location>
    <ligand>
        <name>an all-trans-polyprenyl diphosphate</name>
        <dbReference type="ChEBI" id="CHEBI:58914"/>
    </ligand>
</feature>
<feature type="binding site" evidence="1">
    <location>
        <position position="241"/>
    </location>
    <ligand>
        <name>an all-trans-polyprenyl diphosphate</name>
        <dbReference type="ChEBI" id="CHEBI:58914"/>
    </ligand>
</feature>
<gene>
    <name type="primary">idsA</name>
    <name type="ordered locus">MJ0860</name>
</gene>